<gene>
    <name evidence="5" type="primary">trpm5</name>
</gene>
<organism>
    <name type="scientific">Danio rerio</name>
    <name type="common">Zebrafish</name>
    <name type="synonym">Brachydanio rerio</name>
    <dbReference type="NCBI Taxonomy" id="7955"/>
    <lineage>
        <taxon>Eukaryota</taxon>
        <taxon>Metazoa</taxon>
        <taxon>Chordata</taxon>
        <taxon>Craniata</taxon>
        <taxon>Vertebrata</taxon>
        <taxon>Euteleostomi</taxon>
        <taxon>Actinopterygii</taxon>
        <taxon>Neopterygii</taxon>
        <taxon>Teleostei</taxon>
        <taxon>Ostariophysi</taxon>
        <taxon>Cypriniformes</taxon>
        <taxon>Danionidae</taxon>
        <taxon>Danioninae</taxon>
        <taxon>Danio</taxon>
    </lineage>
</organism>
<evidence type="ECO:0000250" key="1">
    <source>
        <dbReference type="UniProtKB" id="Q9JJH7"/>
    </source>
</evidence>
<evidence type="ECO:0000256" key="2">
    <source>
        <dbReference type="SAM" id="MobiDB-lite"/>
    </source>
</evidence>
<evidence type="ECO:0000269" key="3">
    <source>
    </source>
</evidence>
<evidence type="ECO:0000305" key="4"/>
<evidence type="ECO:0000312" key="5">
    <source>
        <dbReference type="ZFIN" id="ZDB-GENE-060503-736"/>
    </source>
</evidence>
<evidence type="ECO:0007744" key="6">
    <source>
        <dbReference type="PDB" id="7MBP"/>
    </source>
</evidence>
<evidence type="ECO:0007744" key="7">
    <source>
        <dbReference type="PDB" id="7MBQ"/>
    </source>
</evidence>
<evidence type="ECO:0007829" key="8">
    <source>
        <dbReference type="PDB" id="7MBP"/>
    </source>
</evidence>
<evidence type="ECO:0007829" key="9">
    <source>
        <dbReference type="PDB" id="7MBQ"/>
    </source>
</evidence>
<evidence type="ECO:0007829" key="10">
    <source>
        <dbReference type="PDB" id="7MBV"/>
    </source>
</evidence>
<name>TRPM5_DANRE</name>
<dbReference type="EMBL" id="KF305313">
    <property type="protein sequence ID" value="AGS55987.1"/>
    <property type="molecule type" value="mRNA"/>
</dbReference>
<dbReference type="EMBL" id="AL928843">
    <property type="status" value="NOT_ANNOTATED_CDS"/>
    <property type="molecule type" value="Genomic_DNA"/>
</dbReference>
<dbReference type="EMBL" id="AL929208">
    <property type="status" value="NOT_ANNOTATED_CDS"/>
    <property type="molecule type" value="Genomic_DNA"/>
</dbReference>
<dbReference type="RefSeq" id="XP_017212363.1">
    <property type="nucleotide sequence ID" value="XM_017356874.1"/>
</dbReference>
<dbReference type="PDB" id="7MBP">
    <property type="method" value="EM"/>
    <property type="resolution" value="2.80 A"/>
    <property type="chains" value="A/B/C/D=1-1165"/>
</dbReference>
<dbReference type="PDB" id="7MBQ">
    <property type="method" value="EM"/>
    <property type="resolution" value="2.30 A"/>
    <property type="chains" value="A/B/C/D=1-1165"/>
</dbReference>
<dbReference type="PDB" id="7MBR">
    <property type="method" value="EM"/>
    <property type="chains" value="A/B/C/D=1-1165"/>
</dbReference>
<dbReference type="PDB" id="7MBS">
    <property type="method" value="EM"/>
    <property type="chains" value="A/B/C/D=1-1165"/>
</dbReference>
<dbReference type="PDB" id="7MBT">
    <property type="method" value="EM"/>
    <property type="chains" value="A/B/C/D=1-1165"/>
</dbReference>
<dbReference type="PDB" id="7MBU">
    <property type="method" value="EM"/>
    <property type="chains" value="A/B/C/D=1-1165"/>
</dbReference>
<dbReference type="PDB" id="7MBV">
    <property type="method" value="EM"/>
    <property type="resolution" value="2.80 A"/>
    <property type="chains" value="A/B/C/D=1-1165"/>
</dbReference>
<dbReference type="PDBsum" id="7MBP"/>
<dbReference type="PDBsum" id="7MBQ"/>
<dbReference type="PDBsum" id="7MBR"/>
<dbReference type="PDBsum" id="7MBS"/>
<dbReference type="PDBsum" id="7MBT"/>
<dbReference type="PDBsum" id="7MBU"/>
<dbReference type="PDBsum" id="7MBV"/>
<dbReference type="EMDB" id="EMD-23740"/>
<dbReference type="EMDB" id="EMD-23741"/>
<dbReference type="EMDB" id="EMD-23742"/>
<dbReference type="EMDB" id="EMD-23743"/>
<dbReference type="EMDB" id="EMD-23744"/>
<dbReference type="EMDB" id="EMD-23745"/>
<dbReference type="EMDB" id="EMD-23746"/>
<dbReference type="EMDB" id="EMD-23747"/>
<dbReference type="EMDB" id="EMD-23748"/>
<dbReference type="SMR" id="S5UH55"/>
<dbReference type="TCDB" id="1.A.4.5.14">
    <property type="family name" value="the transient receptor potential ca2+/cation channel (trp-cc) family"/>
</dbReference>
<dbReference type="AGR" id="ZFIN:ZDB-GENE-060503-736"/>
<dbReference type="ZFIN" id="ZDB-GENE-060503-736">
    <property type="gene designation" value="trpm5"/>
</dbReference>
<dbReference type="OrthoDB" id="310870at2759"/>
<dbReference type="Proteomes" id="UP000000437">
    <property type="component" value="Chromosome 7"/>
</dbReference>
<dbReference type="Bgee" id="ENSDARG00000059792">
    <property type="expression patterns" value="Expressed in taste bud and 9 other cell types or tissues"/>
</dbReference>
<dbReference type="GO" id="GO:0005886">
    <property type="term" value="C:plasma membrane"/>
    <property type="evidence" value="ECO:0007669"/>
    <property type="project" value="UniProtKB-SubCell"/>
</dbReference>
<dbReference type="GO" id="GO:0005262">
    <property type="term" value="F:calcium channel activity"/>
    <property type="evidence" value="ECO:0007669"/>
    <property type="project" value="InterPro"/>
</dbReference>
<dbReference type="GO" id="GO:0005509">
    <property type="term" value="F:calcium ion binding"/>
    <property type="evidence" value="ECO:0000314"/>
    <property type="project" value="UniProtKB"/>
</dbReference>
<dbReference type="GO" id="GO:0005227">
    <property type="term" value="F:calcium-activated cation channel activity"/>
    <property type="evidence" value="ECO:0000314"/>
    <property type="project" value="UniProtKB"/>
</dbReference>
<dbReference type="GO" id="GO:0042802">
    <property type="term" value="F:identical protein binding"/>
    <property type="evidence" value="ECO:0000314"/>
    <property type="project" value="UniProtKB"/>
</dbReference>
<dbReference type="InterPro" id="IPR005821">
    <property type="entry name" value="Ion_trans_dom"/>
</dbReference>
<dbReference type="InterPro" id="IPR002153">
    <property type="entry name" value="TRPC_channel"/>
</dbReference>
<dbReference type="InterPro" id="IPR050927">
    <property type="entry name" value="TRPM"/>
</dbReference>
<dbReference type="InterPro" id="IPR041491">
    <property type="entry name" value="TRPM_SLOG"/>
</dbReference>
<dbReference type="PANTHER" id="PTHR13800:SF5">
    <property type="entry name" value="TRANSIENT RECEPTOR POTENTIAL CATION CHANNEL SUBFAMILY M MEMBER 5"/>
    <property type="match status" value="1"/>
</dbReference>
<dbReference type="PANTHER" id="PTHR13800">
    <property type="entry name" value="TRANSIENT RECEPTOR POTENTIAL CATION CHANNEL, SUBFAMILY M, MEMBER 6"/>
    <property type="match status" value="1"/>
</dbReference>
<dbReference type="Pfam" id="PF00520">
    <property type="entry name" value="Ion_trans"/>
    <property type="match status" value="1"/>
</dbReference>
<dbReference type="Pfam" id="PF18139">
    <property type="entry name" value="LSDAT_euk"/>
    <property type="match status" value="1"/>
</dbReference>
<dbReference type="Pfam" id="PF25508">
    <property type="entry name" value="TRPM2"/>
    <property type="match status" value="1"/>
</dbReference>
<dbReference type="PRINTS" id="PR01097">
    <property type="entry name" value="TRNSRECEPTRP"/>
</dbReference>
<proteinExistence type="evidence at protein level"/>
<sequence>MVEKSSERFDKQMAGRLGDIDFTGVSRTRGKFVRVTSSTDPAEIYQILTKQWGLAPPHLVVALMGGDEVAQLKPWLRDTLRKGLVKAAQSTGAWILTSGLRFGITKNLGQAVRDHSLASTSPKVRVVAIGIAPWNMIQNRDLLLSAKPDHPATYPTEDLPYGAVYSLDCNHSHFILVDEDPKRPGATGEMRVKMLKHISLQRTGYGGTGSIEIPVLCLLVHGEPRILQKMYKNIQNSIPWLILAGSGGVADILVTLMDRGCWDADIVQELLINTFPDGLHSTEITSWTKLIQRILDHGHLLTVHDPEQDSELDTVILKALVKACKSQSQEAQDFLDELKLAVAWNRVDIAKSEIFSGDVQWSAQDLEEVMMEALVNDKPDFVRLFVDNGVNIKQFLTYGRLQELYCSVSEKNLLHTLLLKKNQERQAQLARKRMSGNPNNELGDRKFRFTFHEVSKVLKDFLDDTCKGFYQKLPAERMGKGRLFHSQKNLPDMDRRCEHPWRDLFLWAILQNRQEMANYFWAMGPEAVAAALVGCKIMKEMAHLATEAESARSMKNAKYEQFAMDLFSECYSNSEDRAYSLLVRKTCCWSKATVLNIATLAEAKCFFAHDGVQALLTKVWWGAMRTDTSISRLVLTFFIPPLVWTSLIKFNPEEQVSKDEGEPFAELDSLETEQALLLTDGDPVAGEGSAETAARSCSATFIRVVLRRWNRFWSAPVTVFMGNVIMYFAFLILFSYVLLLDFRPPPPYGPSAAEIILYFWVFTLVLEEIRQSFFTDEDMSILKKMKLYVEDNWNKCDMVAISLFVVGLSCRMAMSTYEAGRTVLALDFMVFTLRLIHIFAIHKQLGPKIIIVERMIKDVFFFLFFLSVWLIAYGVTTQALLHPNDPRIDWVFRRALYRPYLHIFGQIPLEEIDAAKMPDDNCTTDVQEIILGTLPPCPNIYANWLVILLLVIYLLVTNVLLLNLLIAMFSYTFQVVQENADIFWKFQRYNLIVEYHSRPALAPPFIIISHITQALLSFIKKTENTQDLLERELPSGLDQKLMTWETVQKENYLAKLEHEHRESSGERLRYTSSKVQTLLRMVGGFKDQEKRMATVETEVRYCGEVLSWIAECFHKSTLKCDRDAPKAPRSIAGSSRDQQPQGAKRQQPAGHPAYGTDKKLPFIDH</sequence>
<accession>S5UH55</accession>
<accession>A0A0R4IB92</accession>
<accession>A0A8M6Z1J3</accession>
<protein>
    <recommendedName>
        <fullName>Transient receptor potential cation channel subfamily M member 5</fullName>
    </recommendedName>
</protein>
<feature type="chain" id="PRO_0000460930" description="Transient receptor potential cation channel subfamily M member 5">
    <location>
        <begin position="1"/>
        <end position="1165"/>
    </location>
</feature>
<feature type="topological domain" description="Cytoplasmic" evidence="4">
    <location>
        <begin position="1"/>
        <end position="715"/>
    </location>
</feature>
<feature type="transmembrane region" description="Helical; Name=1" evidence="3">
    <location>
        <begin position="716"/>
        <end position="740"/>
    </location>
</feature>
<feature type="topological domain" description="Extracellular" evidence="4">
    <location>
        <begin position="741"/>
        <end position="751"/>
    </location>
</feature>
<feature type="transmembrane region" description="Helical; Name=2" evidence="3">
    <location>
        <begin position="752"/>
        <end position="771"/>
    </location>
</feature>
<feature type="topological domain" description="Cytoplasmic" evidence="4">
    <location>
        <begin position="772"/>
        <end position="792"/>
    </location>
</feature>
<feature type="transmembrane region" description="Helical; Name=3" evidence="3">
    <location>
        <begin position="793"/>
        <end position="811"/>
    </location>
</feature>
<feature type="topological domain" description="Extracellular" evidence="4">
    <location>
        <begin position="812"/>
        <end position="818"/>
    </location>
</feature>
<feature type="transmembrane region" description="Helical; Name=4" evidence="3">
    <location>
        <begin position="819"/>
        <end position="841"/>
    </location>
</feature>
<feature type="topological domain" description="Cytoplasmic" evidence="4">
    <location>
        <begin position="842"/>
        <end position="850"/>
    </location>
</feature>
<feature type="transmembrane region" description="Helical; Name=5" evidence="3">
    <location>
        <begin position="851"/>
        <end position="880"/>
    </location>
</feature>
<feature type="topological domain" description="Extracellular" evidence="4">
    <location>
        <begin position="881"/>
        <end position="889"/>
    </location>
</feature>
<feature type="intramembrane region" description="Pore-forming" evidence="4">
    <location>
        <begin position="890"/>
        <end position="930"/>
    </location>
</feature>
<feature type="topological domain" description="Extracellular" evidence="4">
    <location>
        <begin position="931"/>
        <end position="942"/>
    </location>
</feature>
<feature type="transmembrane region" description="Helical; Name=6" evidence="3">
    <location>
        <begin position="943"/>
        <end position="977"/>
    </location>
</feature>
<feature type="topological domain" description="Cytoplasmic" evidence="4">
    <location>
        <begin position="978"/>
        <end position="1165"/>
    </location>
</feature>
<feature type="region of interest" description="Disordered" evidence="2">
    <location>
        <begin position="1122"/>
        <end position="1165"/>
    </location>
</feature>
<feature type="short sequence motif" description="Selectivity filter">
    <location>
        <begin position="904"/>
        <end position="906"/>
    </location>
</feature>
<feature type="compositionally biased region" description="Polar residues" evidence="2">
    <location>
        <begin position="1132"/>
        <end position="1141"/>
    </location>
</feature>
<feature type="compositionally biased region" description="Basic and acidic residues" evidence="2">
    <location>
        <begin position="1156"/>
        <end position="1165"/>
    </location>
</feature>
<feature type="binding site" evidence="3">
    <location>
        <position position="212"/>
    </location>
    <ligand>
        <name>Ca(2+)</name>
        <dbReference type="ChEBI" id="CHEBI:29108"/>
        <label>1</label>
    </ligand>
</feature>
<feature type="binding site" evidence="3">
    <location>
        <position position="324"/>
    </location>
    <ligand>
        <name>Ca(2+)</name>
        <dbReference type="ChEBI" id="CHEBI:29108"/>
        <label>1</label>
    </ligand>
</feature>
<feature type="binding site" evidence="3">
    <location>
        <position position="333"/>
    </location>
    <ligand>
        <name>Ca(2+)</name>
        <dbReference type="ChEBI" id="CHEBI:29108"/>
        <label>1</label>
    </ligand>
</feature>
<feature type="binding site" evidence="3">
    <location>
        <position position="336"/>
    </location>
    <ligand>
        <name>Ca(2+)</name>
        <dbReference type="ChEBI" id="CHEBI:29108"/>
        <label>1</label>
    </ligand>
</feature>
<feature type="binding site" evidence="3">
    <location>
        <position position="337"/>
    </location>
    <ligand>
        <name>Ca(2+)</name>
        <dbReference type="ChEBI" id="CHEBI:29108"/>
        <label>1</label>
    </ligand>
</feature>
<feature type="binding site" evidence="3">
    <location>
        <position position="768"/>
    </location>
    <ligand>
        <name>Ca(2+)</name>
        <dbReference type="ChEBI" id="CHEBI:29108"/>
        <label>2</label>
    </ligand>
</feature>
<feature type="binding site" evidence="3">
    <location>
        <position position="771"/>
    </location>
    <ligand>
        <name>Ca(2+)</name>
        <dbReference type="ChEBI" id="CHEBI:29108"/>
        <label>2</label>
    </ligand>
</feature>
<feature type="binding site" evidence="3">
    <location>
        <position position="794"/>
    </location>
    <ligand>
        <name>Ca(2+)</name>
        <dbReference type="ChEBI" id="CHEBI:29108"/>
        <label>2</label>
    </ligand>
</feature>
<feature type="binding site" evidence="3">
    <location>
        <position position="797"/>
    </location>
    <ligand>
        <name>Ca(2+)</name>
        <dbReference type="ChEBI" id="CHEBI:29108"/>
        <label>2</label>
    </ligand>
</feature>
<feature type="binding site" evidence="3">
    <location>
        <position position="994"/>
    </location>
    <ligand>
        <name>Ca(2+)</name>
        <dbReference type="ChEBI" id="CHEBI:29108"/>
        <label>2</label>
    </ligand>
</feature>
<feature type="modified residue" description="Phosphoserine" evidence="1">
    <location>
        <position position="121"/>
    </location>
</feature>
<feature type="mutagenesis site" description="Altered the voltage sensitivity. Renders TRPM5 voltage-sensitive at high Ca(2+) concentration." evidence="3">
    <original>E</original>
    <variation>A</variation>
    <location>
        <position position="337"/>
    </location>
</feature>
<feature type="mutagenesis site" description="The antagonist NDNA fails to suppress channel activity." evidence="3">
    <original>W</original>
    <variation>A</variation>
    <location>
        <position position="793"/>
    </location>
</feature>
<feature type="mutagenesis site" description="The antagonist NDNA fails to suppress channel activity." evidence="3">
    <original>I</original>
    <variation>A</variation>
    <location>
        <position position="836"/>
    </location>
</feature>
<feature type="mutagenesis site" description="The antagonist NDNA fails to suppress channel activity." evidence="3">
    <original>E</original>
    <variation>A</variation>
    <location>
        <position position="853"/>
    </location>
</feature>
<feature type="sequence conflict" description="In Ref. 1; AGS55987." evidence="4" ref="1">
    <original>A</original>
    <variation>G</variation>
    <location>
        <position position="1149"/>
    </location>
</feature>
<feature type="strand" evidence="9">
    <location>
        <begin position="17"/>
        <end position="26"/>
    </location>
</feature>
<feature type="strand" evidence="9">
    <location>
        <begin position="28"/>
        <end position="35"/>
    </location>
</feature>
<feature type="helix" evidence="9">
    <location>
        <begin position="41"/>
        <end position="49"/>
    </location>
</feature>
<feature type="turn" evidence="9">
    <location>
        <begin position="50"/>
        <end position="52"/>
    </location>
</feature>
<feature type="strand" evidence="9">
    <location>
        <begin position="58"/>
        <end position="65"/>
    </location>
</feature>
<feature type="strand" evidence="9">
    <location>
        <begin position="68"/>
        <end position="70"/>
    </location>
</feature>
<feature type="helix" evidence="9">
    <location>
        <begin position="74"/>
        <end position="89"/>
    </location>
</feature>
<feature type="strand" evidence="9">
    <location>
        <begin position="93"/>
        <end position="97"/>
    </location>
</feature>
<feature type="strand" evidence="9">
    <location>
        <begin position="100"/>
        <end position="102"/>
    </location>
</feature>
<feature type="helix" evidence="9">
    <location>
        <begin position="103"/>
        <end position="118"/>
    </location>
</feature>
<feature type="strand" evidence="10">
    <location>
        <begin position="122"/>
        <end position="124"/>
    </location>
</feature>
<feature type="strand" evidence="9">
    <location>
        <begin position="126"/>
        <end position="133"/>
    </location>
</feature>
<feature type="helix" evidence="9">
    <location>
        <begin position="134"/>
        <end position="136"/>
    </location>
</feature>
<feature type="helix" evidence="9">
    <location>
        <begin position="140"/>
        <end position="143"/>
    </location>
</feature>
<feature type="strand" evidence="9">
    <location>
        <begin position="148"/>
        <end position="150"/>
    </location>
</feature>
<feature type="strand" evidence="9">
    <location>
        <begin position="152"/>
        <end position="155"/>
    </location>
</feature>
<feature type="strand" evidence="9">
    <location>
        <begin position="161"/>
        <end position="163"/>
    </location>
</feature>
<feature type="strand" evidence="9">
    <location>
        <begin position="173"/>
        <end position="177"/>
    </location>
</feature>
<feature type="helix" evidence="9">
    <location>
        <begin position="186"/>
        <end position="199"/>
    </location>
</feature>
<feature type="strand" evidence="9">
    <location>
        <begin position="202"/>
        <end position="205"/>
    </location>
</feature>
<feature type="turn" evidence="9">
    <location>
        <begin position="206"/>
        <end position="208"/>
    </location>
</feature>
<feature type="strand" evidence="9">
    <location>
        <begin position="209"/>
        <end position="212"/>
    </location>
</feature>
<feature type="strand" evidence="9">
    <location>
        <begin position="215"/>
        <end position="221"/>
    </location>
</feature>
<feature type="helix" evidence="9">
    <location>
        <begin position="224"/>
        <end position="226"/>
    </location>
</feature>
<feature type="helix" evidence="9">
    <location>
        <begin position="227"/>
        <end position="235"/>
    </location>
</feature>
<feature type="strand" evidence="9">
    <location>
        <begin position="240"/>
        <end position="243"/>
    </location>
</feature>
<feature type="strand" evidence="9">
    <location>
        <begin position="246"/>
        <end position="248"/>
    </location>
</feature>
<feature type="helix" evidence="9">
    <location>
        <begin position="249"/>
        <end position="259"/>
    </location>
</feature>
<feature type="helix" evidence="9">
    <location>
        <begin position="264"/>
        <end position="274"/>
    </location>
</feature>
<feature type="helix" evidence="9">
    <location>
        <begin position="281"/>
        <end position="297"/>
    </location>
</feature>
<feature type="strand" evidence="9">
    <location>
        <begin position="301"/>
        <end position="304"/>
    </location>
</feature>
<feature type="turn" evidence="9">
    <location>
        <begin position="306"/>
        <end position="309"/>
    </location>
</feature>
<feature type="helix" evidence="9">
    <location>
        <begin position="312"/>
        <end position="327"/>
    </location>
</feature>
<feature type="helix" evidence="9">
    <location>
        <begin position="332"/>
        <end position="334"/>
    </location>
</feature>
<feature type="helix" evidence="9">
    <location>
        <begin position="335"/>
        <end position="344"/>
    </location>
</feature>
<feature type="helix" evidence="9">
    <location>
        <begin position="347"/>
        <end position="352"/>
    </location>
</feature>
<feature type="turn" evidence="9">
    <location>
        <begin position="353"/>
        <end position="355"/>
    </location>
</feature>
<feature type="strand" evidence="9">
    <location>
        <begin position="356"/>
        <end position="359"/>
    </location>
</feature>
<feature type="helix" evidence="9">
    <location>
        <begin position="364"/>
        <end position="366"/>
    </location>
</feature>
<feature type="helix" evidence="9">
    <location>
        <begin position="367"/>
        <end position="375"/>
    </location>
</feature>
<feature type="helix" evidence="9">
    <location>
        <begin position="379"/>
        <end position="387"/>
    </location>
</feature>
<feature type="helix" evidence="9">
    <location>
        <begin position="392"/>
        <end position="395"/>
    </location>
</feature>
<feature type="helix" evidence="9">
    <location>
        <begin position="398"/>
        <end position="406"/>
    </location>
</feature>
<feature type="strand" evidence="9">
    <location>
        <begin position="410"/>
        <end position="412"/>
    </location>
</feature>
<feature type="helix" evidence="9">
    <location>
        <begin position="413"/>
        <end position="428"/>
    </location>
</feature>
<feature type="helix" evidence="9">
    <location>
        <begin position="451"/>
        <end position="459"/>
    </location>
</feature>
<feature type="strand" evidence="9">
    <location>
        <begin position="463"/>
        <end position="465"/>
    </location>
</feature>
<feature type="strand" evidence="9">
    <location>
        <begin position="469"/>
        <end position="471"/>
    </location>
</feature>
<feature type="helix" evidence="9">
    <location>
        <begin position="500"/>
        <end position="510"/>
    </location>
</feature>
<feature type="helix" evidence="9">
    <location>
        <begin position="514"/>
        <end position="522"/>
    </location>
</feature>
<feature type="helix" evidence="9">
    <location>
        <begin position="527"/>
        <end position="544"/>
    </location>
</feature>
<feature type="strand" evidence="9">
    <location>
        <begin position="546"/>
        <end position="548"/>
    </location>
</feature>
<feature type="helix" evidence="9">
    <location>
        <begin position="549"/>
        <end position="555"/>
    </location>
</feature>
<feature type="helix" evidence="9">
    <location>
        <begin position="559"/>
        <end position="573"/>
    </location>
</feature>
<feature type="helix" evidence="9">
    <location>
        <begin position="577"/>
        <end position="583"/>
    </location>
</feature>
<feature type="strand" evidence="8">
    <location>
        <begin position="584"/>
        <end position="586"/>
    </location>
</feature>
<feature type="turn" evidence="9">
    <location>
        <begin position="587"/>
        <end position="590"/>
    </location>
</feature>
<feature type="strand" evidence="8">
    <location>
        <begin position="591"/>
        <end position="593"/>
    </location>
</feature>
<feature type="helix" evidence="9">
    <location>
        <begin position="594"/>
        <end position="601"/>
    </location>
</feature>
<feature type="helix" evidence="9">
    <location>
        <begin position="604"/>
        <end position="607"/>
    </location>
</feature>
<feature type="helix" evidence="9">
    <location>
        <begin position="610"/>
        <end position="621"/>
    </location>
</feature>
<feature type="helix" evidence="9">
    <location>
        <begin position="630"/>
        <end position="638"/>
    </location>
</feature>
<feature type="helix" evidence="9">
    <location>
        <begin position="640"/>
        <end position="644"/>
    </location>
</feature>
<feature type="strand" evidence="8">
    <location>
        <begin position="645"/>
        <end position="648"/>
    </location>
</feature>
<feature type="helix" evidence="9">
    <location>
        <begin position="699"/>
        <end position="713"/>
    </location>
</feature>
<feature type="helix" evidence="9">
    <location>
        <begin position="716"/>
        <end position="739"/>
    </location>
</feature>
<feature type="turn" evidence="9">
    <location>
        <begin position="746"/>
        <end position="748"/>
    </location>
</feature>
<feature type="helix" evidence="9">
    <location>
        <begin position="752"/>
        <end position="773"/>
    </location>
</feature>
<feature type="strand" evidence="9">
    <location>
        <begin position="774"/>
        <end position="777"/>
    </location>
</feature>
<feature type="helix" evidence="9">
    <location>
        <begin position="781"/>
        <end position="790"/>
    </location>
</feature>
<feature type="helix" evidence="9">
    <location>
        <begin position="792"/>
        <end position="811"/>
    </location>
</feature>
<feature type="helix" evidence="9">
    <location>
        <begin position="814"/>
        <end position="816"/>
    </location>
</feature>
<feature type="helix" evidence="9">
    <location>
        <begin position="817"/>
        <end position="834"/>
    </location>
</feature>
<feature type="helix" evidence="9">
    <location>
        <begin position="835"/>
        <end position="841"/>
    </location>
</feature>
<feature type="turn" evidence="9">
    <location>
        <begin position="843"/>
        <end position="845"/>
    </location>
</feature>
<feature type="helix" evidence="9">
    <location>
        <begin position="846"/>
        <end position="881"/>
    </location>
</feature>
<feature type="helix" evidence="9">
    <location>
        <begin position="888"/>
        <end position="902"/>
    </location>
</feature>
<feature type="turn" evidence="9">
    <location>
        <begin position="903"/>
        <end position="905"/>
    </location>
</feature>
<feature type="helix" evidence="9">
    <location>
        <begin position="909"/>
        <end position="911"/>
    </location>
</feature>
<feature type="helix" evidence="9">
    <location>
        <begin position="914"/>
        <end position="916"/>
    </location>
</feature>
<feature type="helix" evidence="9">
    <location>
        <begin position="926"/>
        <end position="931"/>
    </location>
</feature>
<feature type="helix" evidence="9">
    <location>
        <begin position="943"/>
        <end position="958"/>
    </location>
</feature>
<feature type="helix" evidence="9">
    <location>
        <begin position="960"/>
        <end position="978"/>
    </location>
</feature>
<feature type="helix" evidence="9">
    <location>
        <begin position="980"/>
        <end position="996"/>
    </location>
</feature>
<feature type="turn" evidence="8">
    <location>
        <begin position="1003"/>
        <end position="1005"/>
    </location>
</feature>
<feature type="helix" evidence="9">
    <location>
        <begin position="1006"/>
        <end position="1019"/>
    </location>
</feature>
<feature type="strand" evidence="9">
    <location>
        <begin position="1029"/>
        <end position="1031"/>
    </location>
</feature>
<feature type="helix" evidence="9">
    <location>
        <begin position="1035"/>
        <end position="1061"/>
    </location>
</feature>
<feature type="helix" evidence="9">
    <location>
        <begin position="1064"/>
        <end position="1091"/>
    </location>
</feature>
<reference key="1">
    <citation type="journal article" date="2013" name="Dev. Dyn.">
        <title>Phylogenetic analysis and expression of zebrafish transient receptor potential melastatin family genes.</title>
        <authorList>
            <person name="Kastenhuber E."/>
            <person name="Gesemann M."/>
            <person name="Mickoleit M."/>
            <person name="Neuhauss S.C."/>
        </authorList>
    </citation>
    <scope>NUCLEOTIDE SEQUENCE [MRNA]</scope>
</reference>
<reference key="2">
    <citation type="journal article" date="2013" name="Nature">
        <title>The zebrafish reference genome sequence and its relationship to the human genome.</title>
        <authorList>
            <person name="Howe K."/>
            <person name="Clark M.D."/>
            <person name="Torroja C.F."/>
            <person name="Torrance J."/>
            <person name="Berthelot C."/>
            <person name="Muffato M."/>
            <person name="Collins J.E."/>
            <person name="Humphray S."/>
            <person name="McLaren K."/>
            <person name="Matthews L."/>
            <person name="McLaren S."/>
            <person name="Sealy I."/>
            <person name="Caccamo M."/>
            <person name="Churcher C."/>
            <person name="Scott C."/>
            <person name="Barrett J.C."/>
            <person name="Koch R."/>
            <person name="Rauch G.J."/>
            <person name="White S."/>
            <person name="Chow W."/>
            <person name="Kilian B."/>
            <person name="Quintais L.T."/>
            <person name="Guerra-Assuncao J.A."/>
            <person name="Zhou Y."/>
            <person name="Gu Y."/>
            <person name="Yen J."/>
            <person name="Vogel J.H."/>
            <person name="Eyre T."/>
            <person name="Redmond S."/>
            <person name="Banerjee R."/>
            <person name="Chi J."/>
            <person name="Fu B."/>
            <person name="Langley E."/>
            <person name="Maguire S.F."/>
            <person name="Laird G.K."/>
            <person name="Lloyd D."/>
            <person name="Kenyon E."/>
            <person name="Donaldson S."/>
            <person name="Sehra H."/>
            <person name="Almeida-King J."/>
            <person name="Loveland J."/>
            <person name="Trevanion S."/>
            <person name="Jones M."/>
            <person name="Quail M."/>
            <person name="Willey D."/>
            <person name="Hunt A."/>
            <person name="Burton J."/>
            <person name="Sims S."/>
            <person name="McLay K."/>
            <person name="Plumb B."/>
            <person name="Davis J."/>
            <person name="Clee C."/>
            <person name="Oliver K."/>
            <person name="Clark R."/>
            <person name="Riddle C."/>
            <person name="Elliot D."/>
            <person name="Threadgold G."/>
            <person name="Harden G."/>
            <person name="Ware D."/>
            <person name="Begum S."/>
            <person name="Mortimore B."/>
            <person name="Kerry G."/>
            <person name="Heath P."/>
            <person name="Phillimore B."/>
            <person name="Tracey A."/>
            <person name="Corby N."/>
            <person name="Dunn M."/>
            <person name="Johnson C."/>
            <person name="Wood J."/>
            <person name="Clark S."/>
            <person name="Pelan S."/>
            <person name="Griffiths G."/>
            <person name="Smith M."/>
            <person name="Glithero R."/>
            <person name="Howden P."/>
            <person name="Barker N."/>
            <person name="Lloyd C."/>
            <person name="Stevens C."/>
            <person name="Harley J."/>
            <person name="Holt K."/>
            <person name="Panagiotidis G."/>
            <person name="Lovell J."/>
            <person name="Beasley H."/>
            <person name="Henderson C."/>
            <person name="Gordon D."/>
            <person name="Auger K."/>
            <person name="Wright D."/>
            <person name="Collins J."/>
            <person name="Raisen C."/>
            <person name="Dyer L."/>
            <person name="Leung K."/>
            <person name="Robertson L."/>
            <person name="Ambridge K."/>
            <person name="Leongamornlert D."/>
            <person name="McGuire S."/>
            <person name="Gilderthorp R."/>
            <person name="Griffiths C."/>
            <person name="Manthravadi D."/>
            <person name="Nichol S."/>
            <person name="Barker G."/>
            <person name="Whitehead S."/>
            <person name="Kay M."/>
            <person name="Brown J."/>
            <person name="Murnane C."/>
            <person name="Gray E."/>
            <person name="Humphries M."/>
            <person name="Sycamore N."/>
            <person name="Barker D."/>
            <person name="Saunders D."/>
            <person name="Wallis J."/>
            <person name="Babbage A."/>
            <person name="Hammond S."/>
            <person name="Mashreghi-Mohammadi M."/>
            <person name="Barr L."/>
            <person name="Martin S."/>
            <person name="Wray P."/>
            <person name="Ellington A."/>
            <person name="Matthews N."/>
            <person name="Ellwood M."/>
            <person name="Woodmansey R."/>
            <person name="Clark G."/>
            <person name="Cooper J."/>
            <person name="Tromans A."/>
            <person name="Grafham D."/>
            <person name="Skuce C."/>
            <person name="Pandian R."/>
            <person name="Andrews R."/>
            <person name="Harrison E."/>
            <person name="Kimberley A."/>
            <person name="Garnett J."/>
            <person name="Fosker N."/>
            <person name="Hall R."/>
            <person name="Garner P."/>
            <person name="Kelly D."/>
            <person name="Bird C."/>
            <person name="Palmer S."/>
            <person name="Gehring I."/>
            <person name="Berger A."/>
            <person name="Dooley C.M."/>
            <person name="Ersan-Urun Z."/>
            <person name="Eser C."/>
            <person name="Geiger H."/>
            <person name="Geisler M."/>
            <person name="Karotki L."/>
            <person name="Kirn A."/>
            <person name="Konantz J."/>
            <person name="Konantz M."/>
            <person name="Oberlander M."/>
            <person name="Rudolph-Geiger S."/>
            <person name="Teucke M."/>
            <person name="Lanz C."/>
            <person name="Raddatz G."/>
            <person name="Osoegawa K."/>
            <person name="Zhu B."/>
            <person name="Rapp A."/>
            <person name="Widaa S."/>
            <person name="Langford C."/>
            <person name="Yang F."/>
            <person name="Schuster S.C."/>
            <person name="Carter N.P."/>
            <person name="Harrow J."/>
            <person name="Ning Z."/>
            <person name="Herrero J."/>
            <person name="Searle S.M."/>
            <person name="Enright A."/>
            <person name="Geisler R."/>
            <person name="Plasterk R.H."/>
            <person name="Lee C."/>
            <person name="Westerfield M."/>
            <person name="de Jong P.J."/>
            <person name="Zon L.I."/>
            <person name="Postlethwait J.H."/>
            <person name="Nusslein-Volhard C."/>
            <person name="Hubbard T.J."/>
            <person name="Roest Crollius H."/>
            <person name="Rogers J."/>
            <person name="Stemple D.L."/>
        </authorList>
    </citation>
    <scope>NUCLEOTIDE SEQUENCE [LARGE SCALE GENOMIC DNA]</scope>
    <source>
        <strain>Tuebingen</strain>
    </source>
</reference>
<reference evidence="6 7" key="3">
    <citation type="journal article" date="2021" name="Nat. Struct. Mol. Biol.">
        <title>Structures of the TRPM5 channel elucidate mechanisms of activation and inhibition.</title>
        <authorList>
            <person name="Ruan Z."/>
            <person name="Haley E."/>
            <person name="Orozco I.J."/>
            <person name="Sabat M."/>
            <person name="Myers R."/>
            <person name="Roth R."/>
            <person name="Du J."/>
            <person name="Lu W."/>
        </authorList>
    </citation>
    <scope>STRUCTURE BY ELECTRON MICROSCOPY (2.30 ANGSTROMS) IN COMPLEX WITH CALCIUM AND ANTAGONIST</scope>
    <scope>FUNCTION</scope>
    <scope>SUBUNIT</scope>
    <scope>ACTIVITY REGULATION</scope>
    <scope>MUTAGENESIS OF GLU-337; TRP-793; ILE-836 AND GLU-853</scope>
</reference>
<comment type="function">
    <text evidence="1">Monovalent cation-selective ion channel activated by intracellular Ca(2+) in a voltage- and temperature-dependent manner. Mediates the transport of Na(+), K(+) and Cs(+) ions equally well. Activated directly by increase in intracellular Ca(2+), but is impermeable to it. The activation mechanism of TRPM5 involves a multistep process. TRPM5 activation involves ligand binding (i.e., tastant molecule, glucose stimulation) to Gq/G-protein coupled receptors (GPCR) and leads to the breakdown of phosphatidylinositol bisphosphate (PIP2) into diacylglycerol (DAG) and inositol trisphosphate (IP3), IP3 binds to its receptors in the endoplasmic reticulum and cause Ca(2+) release. Simultaneously with the intracellular Ca(2+) release, DAG activates the protein kinase C (PKC), which phosphorylates the TRPM5 channel. This phosphorylation combined with the bound Ca(2+), leads to a robust inward current allowing the entry of sodium ions (Na+) into the cell. This ion influx depolarizes the cell membrane, generating action potentials that propagate TRPM5 signals.</text>
</comment>
<comment type="catalytic activity">
    <reaction evidence="1">
        <text>Na(+)(in) = Na(+)(out)</text>
        <dbReference type="Rhea" id="RHEA:34963"/>
        <dbReference type="ChEBI" id="CHEBI:29101"/>
    </reaction>
</comment>
<comment type="catalytic activity">
    <reaction evidence="1">
        <text>K(+)(in) = K(+)(out)</text>
        <dbReference type="Rhea" id="RHEA:29463"/>
        <dbReference type="ChEBI" id="CHEBI:29103"/>
    </reaction>
</comment>
<comment type="activity regulation">
    <text evidence="1 3">Ca(2+)-activated cation channel (PubMed:34168372). Displays voltage dependence modulation (PubMed:34168372). Regulated by PI(4,5)P2 levels. PI(4,5)P 2 reverses the Ca(2+) -induced desensitization of channels. Is highly temperature-sensitive (By similarity).</text>
</comment>
<comment type="subunit">
    <text evidence="3">Homotetramer.</text>
</comment>
<comment type="subcellular location">
    <subcellularLocation>
        <location evidence="4">Cell membrane</location>
        <topology evidence="3">Multi-pass membrane protein</topology>
    </subcellularLocation>
</comment>
<comment type="domain">
    <text evidence="3">Contains two Ca(2+)-binding sites that are allosterically coupled. The binding site in the intracellular domain modulates the voltage dependence and the accessibility of Ca(2+) in the transmembrane domain.</text>
</comment>
<comment type="similarity">
    <text evidence="4">Belongs to the transient receptor (TC 1.A.4) family. LTrpC subfamily. TRPM5 sub-subfamily.</text>
</comment>
<keyword id="KW-0002">3D-structure</keyword>
<keyword id="KW-1003">Cell membrane</keyword>
<keyword id="KW-0407">Ion channel</keyword>
<keyword id="KW-0406">Ion transport</keyword>
<keyword id="KW-0472">Membrane</keyword>
<keyword id="KW-0597">Phosphoprotein</keyword>
<keyword id="KW-0675">Receptor</keyword>
<keyword id="KW-1185">Reference proteome</keyword>
<keyword id="KW-0812">Transmembrane</keyword>
<keyword id="KW-1133">Transmembrane helix</keyword>
<keyword id="KW-0813">Transport</keyword>